<accession>P40380</accession>
<accession>O74373</accession>
<organism>
    <name type="scientific">Schizosaccharomyces pombe (strain 972 / ATCC 24843)</name>
    <name type="common">Fission yeast</name>
    <dbReference type="NCBI Taxonomy" id="284812"/>
    <lineage>
        <taxon>Eukaryota</taxon>
        <taxon>Fungi</taxon>
        <taxon>Dikarya</taxon>
        <taxon>Ascomycota</taxon>
        <taxon>Taphrinomycotina</taxon>
        <taxon>Schizosaccharomycetes</taxon>
        <taxon>Schizosaccharomycetales</taxon>
        <taxon>Schizosaccharomycetaceae</taxon>
        <taxon>Schizosaccharomyces</taxon>
    </lineage>
</organism>
<dbReference type="EMBL" id="X77730">
    <property type="protein sequence ID" value="CAA54786.1"/>
    <property type="molecule type" value="mRNA"/>
</dbReference>
<dbReference type="EMBL" id="CU329671">
    <property type="protein sequence ID" value="CAA19370.1"/>
    <property type="molecule type" value="Genomic_DNA"/>
</dbReference>
<dbReference type="PIR" id="S41043">
    <property type="entry name" value="S41043"/>
</dbReference>
<dbReference type="PIR" id="T40233">
    <property type="entry name" value="T40233"/>
</dbReference>
<dbReference type="RefSeq" id="NP_596152.1">
    <property type="nucleotide sequence ID" value="NM_001022071.2"/>
</dbReference>
<dbReference type="BioGRID" id="276195">
    <property type="interactions" value="35"/>
</dbReference>
<dbReference type="FunCoup" id="P40380">
    <property type="interactions" value="5"/>
</dbReference>
<dbReference type="IntAct" id="P40380">
    <property type="interactions" value="5"/>
</dbReference>
<dbReference type="STRING" id="284812.P40380"/>
<dbReference type="iPTMnet" id="P40380"/>
<dbReference type="PaxDb" id="4896-SPBC32F12.09.1"/>
<dbReference type="EnsemblFungi" id="SPBC32F12.09.1">
    <property type="protein sequence ID" value="SPBC32F12.09.1:pep"/>
    <property type="gene ID" value="SPBC32F12.09"/>
</dbReference>
<dbReference type="GeneID" id="2539640"/>
<dbReference type="KEGG" id="spo:2539640"/>
<dbReference type="PomBase" id="SPBC32F12.09">
    <property type="gene designation" value="rum1"/>
</dbReference>
<dbReference type="VEuPathDB" id="FungiDB:SPBC32F12.09"/>
<dbReference type="HOGENOM" id="CLU_1246003_0_0_1"/>
<dbReference type="InParanoid" id="P40380"/>
<dbReference type="OMA" id="ERCMEED"/>
<dbReference type="PRO" id="PR:P40380"/>
<dbReference type="Proteomes" id="UP000002485">
    <property type="component" value="Chromosome II"/>
</dbReference>
<dbReference type="GO" id="GO:0005634">
    <property type="term" value="C:nucleus"/>
    <property type="evidence" value="ECO:0007005"/>
    <property type="project" value="PomBase"/>
</dbReference>
<dbReference type="GO" id="GO:0004861">
    <property type="term" value="F:cyclin-dependent protein serine/threonine kinase inhibitor activity"/>
    <property type="evidence" value="ECO:0000314"/>
    <property type="project" value="PomBase"/>
</dbReference>
<dbReference type="GO" id="GO:0031568">
    <property type="term" value="P:mitotic G1 cell size control checkpoint signaling"/>
    <property type="evidence" value="ECO:0000315"/>
    <property type="project" value="PomBase"/>
</dbReference>
<dbReference type="GO" id="GO:2000134">
    <property type="term" value="P:negative regulation of G1/S transition of mitotic cell cycle"/>
    <property type="evidence" value="ECO:0000315"/>
    <property type="project" value="PomBase"/>
</dbReference>
<dbReference type="GO" id="GO:0045930">
    <property type="term" value="P:negative regulation of mitotic cell cycle"/>
    <property type="evidence" value="ECO:0000314"/>
    <property type="project" value="PomBase"/>
</dbReference>
<dbReference type="GO" id="GO:1903464">
    <property type="term" value="P:negative regulation of mitotic cell cycle DNA replication"/>
    <property type="evidence" value="ECO:0000315"/>
    <property type="project" value="PomBase"/>
</dbReference>
<dbReference type="GO" id="GO:1903467">
    <property type="term" value="P:negative regulation of mitotic DNA replication initiation"/>
    <property type="evidence" value="ECO:0000314"/>
    <property type="project" value="PomBase"/>
</dbReference>
<dbReference type="GO" id="GO:0032436">
    <property type="term" value="P:positive regulation of proteasomal ubiquitin-dependent protein catabolic process"/>
    <property type="evidence" value="ECO:0000269"/>
    <property type="project" value="PomBase"/>
</dbReference>
<dbReference type="GO" id="GO:0007089">
    <property type="term" value="P:traversing start control point of mitotic cell cycle"/>
    <property type="evidence" value="ECO:0000315"/>
    <property type="project" value="PomBase"/>
</dbReference>
<evidence type="ECO:0000256" key="1">
    <source>
        <dbReference type="SAM" id="MobiDB-lite"/>
    </source>
</evidence>
<evidence type="ECO:0000269" key="2">
    <source>
    </source>
</evidence>
<evidence type="ECO:0000269" key="3">
    <source>
    </source>
</evidence>
<evidence type="ECO:0000269" key="4">
    <source>
    </source>
</evidence>
<evidence type="ECO:0000269" key="5">
    <source>
    </source>
</evidence>
<evidence type="ECO:0000269" key="6">
    <source>
    </source>
</evidence>
<evidence type="ECO:0000269" key="7">
    <source>
    </source>
</evidence>
<evidence type="ECO:0000269" key="8">
    <source>
    </source>
</evidence>
<evidence type="ECO:0000269" key="9">
    <source>
    </source>
</evidence>
<evidence type="ECO:0000269" key="10">
    <source>
    </source>
</evidence>
<evidence type="ECO:0000269" key="11">
    <source>
    </source>
</evidence>
<evidence type="ECO:0000305" key="12"/>
<comment type="function">
    <text evidence="2 3 6 7 8 9 10 11">Regulator of cell cycle G1 phase progression. Ensures the correct sequence of S phase and mitosis in the cell by acting as an inhibitor of the cdc2 mitotic kinase. Probably interacts with cdc2 to inhibit its action until the cell mass for Start is reached. Determines the length of the pre-Start G1 period and prevents mitosis from happening in early G1 cells. Required for maintaining pheromone-induced G1 arrest. Acts as an adapter protein since interaction with cdc13 promotes cyclin proteolysis during G1. Becomes a target for degradation at the G1/S phase transition, following phosphorylation by cig1-associated cdc2 at the G1/S phase transition.</text>
</comment>
<comment type="subunit">
    <text evidence="4 8 10 11">Interacts with cdc13, cig2 and pop1.</text>
</comment>
<comment type="interaction">
    <interactant intactId="EBI-1187892">
        <id>P40380</id>
    </interactant>
    <interactant intactId="EBI-1187843">
        <id>P10815</id>
        <label>cdc13</label>
    </interactant>
    <organismsDiffer>false</organismsDiffer>
    <experiments>5</experiments>
</comment>
<comment type="interaction">
    <interactant intactId="EBI-1187892">
        <id>P40380</id>
    </interactant>
    <interactant intactId="EBI-1187862">
        <id>P04551</id>
        <label>cdc2</label>
    </interactant>
    <organismsDiffer>false</organismsDiffer>
    <experiments>2</experiments>
</comment>
<comment type="interaction">
    <interactant intactId="EBI-1187892">
        <id>P40380</id>
    </interactant>
    <interactant intactId="EBI-1149212">
        <id>P36630</id>
        <label>cig2</label>
    </interactant>
    <organismsDiffer>false</organismsDiffer>
    <experiments>2</experiments>
</comment>
<comment type="subcellular location">
    <subcellularLocation>
        <location evidence="5">Nucleus</location>
    </subcellularLocation>
</comment>
<comment type="induction">
    <text evidence="3">Expression increases in nitrogen deprived environment, which is important to cause delay of the G1 phase of the cell cycle in response to nitrogen starvation.</text>
</comment>
<comment type="PTM">
    <text evidence="2 8 9">Phosphorylated by cig1-associated cdc2 which leads to increased stability. Phosphorylation by MAPK reduces cdc2 kinase inhibitor ability.</text>
</comment>
<feature type="chain" id="PRO_0000097531" description="Cyclin-dependent kinase inhibitor rum1">
    <location>
        <begin position="1"/>
        <end position="230"/>
    </location>
</feature>
<feature type="region of interest" description="Disordered" evidence="1">
    <location>
        <begin position="1"/>
        <end position="25"/>
    </location>
</feature>
<feature type="region of interest" description="Disordered" evidence="1">
    <location>
        <begin position="43"/>
        <end position="118"/>
    </location>
</feature>
<feature type="region of interest" description="CDK inhibitory and cyclin-binding">
    <location>
        <begin position="67"/>
        <end position="147"/>
    </location>
</feature>
<feature type="region of interest" description="Required for activity as a cdc2 kinase inhibitor">
    <location>
        <begin position="101"/>
        <end position="230"/>
    </location>
</feature>
<feature type="region of interest" description="Disordered" evidence="1">
    <location>
        <begin position="188"/>
        <end position="230"/>
    </location>
</feature>
<feature type="compositionally biased region" description="Basic and acidic residues" evidence="1">
    <location>
        <begin position="78"/>
        <end position="91"/>
    </location>
</feature>
<feature type="compositionally biased region" description="Polar residues" evidence="1">
    <location>
        <begin position="93"/>
        <end position="102"/>
    </location>
</feature>
<feature type="compositionally biased region" description="Low complexity" evidence="1">
    <location>
        <begin position="188"/>
        <end position="199"/>
    </location>
</feature>
<feature type="compositionally biased region" description="Basic and acidic residues" evidence="1">
    <location>
        <begin position="219"/>
        <end position="230"/>
    </location>
</feature>
<feature type="modified residue" description="Phosphothreonine; by MAPK" evidence="2">
    <location>
        <position position="13"/>
    </location>
</feature>
<feature type="modified residue" description="Phosphoserine; by MAPK" evidence="2">
    <location>
        <position position="19"/>
    </location>
</feature>
<feature type="modified residue" description="Phosphothreonine; by cdc2" evidence="9">
    <location>
        <position position="58"/>
    </location>
</feature>
<feature type="modified residue" description="Phosphothreonine; by cdc2" evidence="9">
    <location>
        <position position="62"/>
    </location>
</feature>
<feature type="mutagenesis site" description="No effect on phenotype and no reduction in 32-P incorporation mediated by MAPK." evidence="2 9">
    <original>T</original>
    <variation>A</variation>
    <location>
        <position position="5"/>
    </location>
</feature>
<feature type="mutagenesis site" description="No effect on phenotype; when associated with A-16 and A-19. Reduced 32-P incorporation mediated by MAPK; when associated with A-19." evidence="2 9">
    <original>T</original>
    <variation>A</variation>
    <location>
        <position position="13"/>
    </location>
</feature>
<feature type="mutagenesis site" description="Reduces activity as a cdc2 inhibitor; when associated with E-19." evidence="2 9">
    <original>T</original>
    <variation>E</variation>
    <location>
        <position position="13"/>
    </location>
</feature>
<feature type="mutagenesis site" description="No effect on phenotype; when associated with A-13 and A-19. No reduction in 32-P incorporation mediated by MAPK." evidence="2 9">
    <original>T</original>
    <variation>A</variation>
    <location>
        <position position="16"/>
    </location>
</feature>
<feature type="mutagenesis site" description="No effect on phenotype; when associated with A-13 and A-16. Reduced 32-P incorporation mediated by MAPK; when associated with A-13." evidence="2 9">
    <original>S</original>
    <variation>A</variation>
    <location>
        <position position="19"/>
    </location>
</feature>
<feature type="mutagenesis site" description="Reduces activity as a cdc2 inhibitor; when associated with E-13." evidence="2 9">
    <original>S</original>
    <variation>E</variation>
    <location>
        <position position="19"/>
    </location>
</feature>
<feature type="mutagenesis site" description="Reduces growth rate into small colonies containing many elongated cells. Phenotype enhances due to increased stability; when associated with A-62. No reduction in 32-P incorporation mediated by MAPK." evidence="2 9">
    <original>T</original>
    <variation>A</variation>
    <location>
        <position position="58"/>
    </location>
</feature>
<feature type="mutagenesis site" description="Shift in mobility; when associated with S-62." evidence="2 9">
    <original>T</original>
    <variation>S</variation>
    <location>
        <position position="58"/>
    </location>
</feature>
<feature type="mutagenesis site" description="Reduces growth rate into small colonies containing many elongated cells. Phenotype enhances due to increased stability; when associated with A-58." evidence="9">
    <original>T</original>
    <variation>A</variation>
    <location>
        <position position="62"/>
    </location>
</feature>
<feature type="mutagenesis site" description="Shift in mobility; when associated with S-58." evidence="9">
    <original>T</original>
    <variation>S</variation>
    <location>
        <position position="62"/>
    </location>
</feature>
<feature type="mutagenesis site" description="No effect on phenotype." evidence="9">
    <original>T</original>
    <variation>A</variation>
    <location>
        <position position="110"/>
    </location>
</feature>
<feature type="mutagenesis site" description="No effect on phenotype." evidence="9">
    <original>S</original>
    <variation>A</variation>
    <location>
        <position position="212"/>
    </location>
</feature>
<feature type="sequence conflict" description="In Ref. 1; CAA54786." evidence="12" ref="1">
    <original>ML</original>
    <variation>IV</variation>
    <location>
        <begin position="72"/>
        <end position="73"/>
    </location>
</feature>
<reference key="1">
    <citation type="journal article" date="1994" name="Nature">
        <title>Regulation of progression through the G1 phase of the cell cycle by the rum1+ gene.</title>
        <authorList>
            <person name="Moreno S."/>
            <person name="Nurse P."/>
        </authorList>
    </citation>
    <scope>NUCLEOTIDE SEQUENCE [MRNA]</scope>
    <scope>FUNCTION</scope>
    <source>
        <strain>972 / ATCC 24843</strain>
    </source>
</reference>
<reference key="2">
    <citation type="journal article" date="2002" name="Nature">
        <title>The genome sequence of Schizosaccharomyces pombe.</title>
        <authorList>
            <person name="Wood V."/>
            <person name="Gwilliam R."/>
            <person name="Rajandream M.A."/>
            <person name="Lyne M.H."/>
            <person name="Lyne R."/>
            <person name="Stewart A."/>
            <person name="Sgouros J.G."/>
            <person name="Peat N."/>
            <person name="Hayles J."/>
            <person name="Baker S.G."/>
            <person name="Basham D."/>
            <person name="Bowman S."/>
            <person name="Brooks K."/>
            <person name="Brown D."/>
            <person name="Brown S."/>
            <person name="Chillingworth T."/>
            <person name="Churcher C.M."/>
            <person name="Collins M."/>
            <person name="Connor R."/>
            <person name="Cronin A."/>
            <person name="Davis P."/>
            <person name="Feltwell T."/>
            <person name="Fraser A."/>
            <person name="Gentles S."/>
            <person name="Goble A."/>
            <person name="Hamlin N."/>
            <person name="Harris D.E."/>
            <person name="Hidalgo J."/>
            <person name="Hodgson G."/>
            <person name="Holroyd S."/>
            <person name="Hornsby T."/>
            <person name="Howarth S."/>
            <person name="Huckle E.J."/>
            <person name="Hunt S."/>
            <person name="Jagels K."/>
            <person name="James K.D."/>
            <person name="Jones L."/>
            <person name="Jones M."/>
            <person name="Leather S."/>
            <person name="McDonald S."/>
            <person name="McLean J."/>
            <person name="Mooney P."/>
            <person name="Moule S."/>
            <person name="Mungall K.L."/>
            <person name="Murphy L.D."/>
            <person name="Niblett D."/>
            <person name="Odell C."/>
            <person name="Oliver K."/>
            <person name="O'Neil S."/>
            <person name="Pearson D."/>
            <person name="Quail M.A."/>
            <person name="Rabbinowitsch E."/>
            <person name="Rutherford K.M."/>
            <person name="Rutter S."/>
            <person name="Saunders D."/>
            <person name="Seeger K."/>
            <person name="Sharp S."/>
            <person name="Skelton J."/>
            <person name="Simmonds M.N."/>
            <person name="Squares R."/>
            <person name="Squares S."/>
            <person name="Stevens K."/>
            <person name="Taylor K."/>
            <person name="Taylor R.G."/>
            <person name="Tivey A."/>
            <person name="Walsh S.V."/>
            <person name="Warren T."/>
            <person name="Whitehead S."/>
            <person name="Woodward J.R."/>
            <person name="Volckaert G."/>
            <person name="Aert R."/>
            <person name="Robben J."/>
            <person name="Grymonprez B."/>
            <person name="Weltjens I."/>
            <person name="Vanstreels E."/>
            <person name="Rieger M."/>
            <person name="Schaefer M."/>
            <person name="Mueller-Auer S."/>
            <person name="Gabel C."/>
            <person name="Fuchs M."/>
            <person name="Duesterhoeft A."/>
            <person name="Fritzc C."/>
            <person name="Holzer E."/>
            <person name="Moestl D."/>
            <person name="Hilbert H."/>
            <person name="Borzym K."/>
            <person name="Langer I."/>
            <person name="Beck A."/>
            <person name="Lehrach H."/>
            <person name="Reinhardt R."/>
            <person name="Pohl T.M."/>
            <person name="Eger P."/>
            <person name="Zimmermann W."/>
            <person name="Wedler H."/>
            <person name="Wambutt R."/>
            <person name="Purnelle B."/>
            <person name="Goffeau A."/>
            <person name="Cadieu E."/>
            <person name="Dreano S."/>
            <person name="Gloux S."/>
            <person name="Lelaure V."/>
            <person name="Mottier S."/>
            <person name="Galibert F."/>
            <person name="Aves S.J."/>
            <person name="Xiang Z."/>
            <person name="Hunt C."/>
            <person name="Moore K."/>
            <person name="Hurst S.M."/>
            <person name="Lucas M."/>
            <person name="Rochet M."/>
            <person name="Gaillardin C."/>
            <person name="Tallada V.A."/>
            <person name="Garzon A."/>
            <person name="Thode G."/>
            <person name="Daga R.R."/>
            <person name="Cruzado L."/>
            <person name="Jimenez J."/>
            <person name="Sanchez M."/>
            <person name="del Rey F."/>
            <person name="Benito J."/>
            <person name="Dominguez A."/>
            <person name="Revuelta J.L."/>
            <person name="Moreno S."/>
            <person name="Armstrong J."/>
            <person name="Forsburg S.L."/>
            <person name="Cerutti L."/>
            <person name="Lowe T."/>
            <person name="McCombie W.R."/>
            <person name="Paulsen I."/>
            <person name="Potashkin J."/>
            <person name="Shpakovski G.V."/>
            <person name="Ussery D."/>
            <person name="Barrell B.G."/>
            <person name="Nurse P."/>
        </authorList>
    </citation>
    <scope>NUCLEOTIDE SEQUENCE [LARGE SCALE GENOMIC DNA]</scope>
    <source>
        <strain>972 / ATCC 24843</strain>
    </source>
</reference>
<reference key="3">
    <citation type="journal article" date="1995" name="Cell">
        <title>p25rum1 orders S phase and mitosis by acting as an inhibitor of the p34cdc2 mitotic kinase.</title>
        <authorList>
            <person name="Correa-Bordes J."/>
            <person name="Nurse P."/>
        </authorList>
    </citation>
    <scope>FUNCTION</scope>
</reference>
<reference key="4">
    <citation type="journal article" date="1997" name="EMBO J.">
        <title>p25rum1 promotes proteolysis of the mitotic B-cyclin p56cdc13 during G1 of the fission yeast cell cycle.</title>
        <authorList>
            <person name="Correa-Bordes J."/>
            <person name="Gulli M.P."/>
            <person name="Nurse P."/>
        </authorList>
    </citation>
    <scope>FUNCTION</scope>
    <scope>INTERACTION WITH CDC13</scope>
    <scope>PHOSPHORYLATION</scope>
</reference>
<reference key="5">
    <citation type="journal article" date="1998" name="EMBO J.">
        <title>Regulation of the G1 phase of the cell cycle by periodic stabilization and degradation of the p25rum1 CDK inhibitor.</title>
        <authorList>
            <person name="Benito J."/>
            <person name="Martin-Castellanos C."/>
            <person name="Moreno S."/>
        </authorList>
    </citation>
    <scope>FUNCTION</scope>
    <scope>PHOSPHORYLATION AT THR-58 AND THR-62</scope>
    <scope>MUTAGENESIS OF THR-5; THR-13; THR-16; SER-19; THR-58; THR-62; THR-110 AND SER-212</scope>
</reference>
<reference key="6">
    <citation type="journal article" date="1998" name="J. Cell Sci.">
        <title>The Cdk inhibitors p25rum1 and p40SIC1 are functional homologues that play similar roles in the regulation of the cell cycle in fission and budding yeast.</title>
        <authorList>
            <person name="Sanchez-Diaz A."/>
            <person name="Gonzalez I."/>
            <person name="Arellano M."/>
            <person name="Moreno S."/>
        </authorList>
    </citation>
    <scope>FUNCTION</scope>
    <scope>INTERACTION WITH CDC13</scope>
    <scope>DOMAIN</scope>
</reference>
<reference key="7">
    <citation type="journal article" date="1998" name="Mol. Biol. Cell">
        <title>Cyclin B proteolysis and the cyclin-dependent kinase inhibitor rum1p are required for pheromone-induced G1 arrest in fission yeast.</title>
        <authorList>
            <person name="Stern B."/>
            <person name="Nurse P."/>
        </authorList>
    </citation>
    <scope>FUNCTION</scope>
    <scope>INTERACTION WITH CDC13 AND CIG2</scope>
</reference>
<reference key="8">
    <citation type="journal article" date="2002" name="Eur. J. Biochem.">
        <title>Rum1, an inhibitor of cyclin-dependent kinase in fission yeast, is negatively regulated by mitogen-activated protein kinase-mediated phosphorylation at Ser and Thr residues.</title>
        <authorList>
            <person name="Matsuoka K."/>
            <person name="Kiyokawa N."/>
            <person name="Taguchi T."/>
            <person name="Matsui J."/>
            <person name="Suzuki T."/>
            <person name="Mimori K."/>
            <person name="Nakajima H."/>
            <person name="Takenouchi H."/>
            <person name="Weiran T."/>
            <person name="Katagiri Y.U."/>
            <person name="Fujimoto J."/>
        </authorList>
    </citation>
    <scope>FUNCTION</scope>
    <scope>PHOSPHORYLATION AT THR-13 AND SER-19</scope>
    <scope>MUTAGENESIS OF THR-5; THR-13; THR-16; SER-19 AND THR-58</scope>
</reference>
<reference key="9">
    <citation type="journal article" date="2003" name="Curr. Biol.">
        <title>Regulated mRNA stability of the Cdk inhibitor Rum1 links nutrient status to cell cycle progression.</title>
        <authorList>
            <person name="Daga R.R."/>
            <person name="Bolanos P."/>
            <person name="Moreno S."/>
        </authorList>
    </citation>
    <scope>FUNCTION</scope>
    <scope>INDUCTION</scope>
</reference>
<reference key="10">
    <citation type="journal article" date="2004" name="J. Biol. Chem.">
        <title>Requirement of the SCFPop1/Pop2 ubiquitin ligase for degradation of the fission yeast S phase cyclin Cig2.</title>
        <authorList>
            <person name="Yamano H."/>
            <person name="Kominami K."/>
            <person name="Harrison C."/>
            <person name="Kitamura K."/>
            <person name="Katayama S."/>
            <person name="Dhut S."/>
            <person name="Hunt T."/>
            <person name="Toda T."/>
        </authorList>
    </citation>
    <scope>INTERACTION WITH POP1</scope>
</reference>
<reference key="11">
    <citation type="journal article" date="2006" name="Nat. Biotechnol.">
        <title>ORFeome cloning and global analysis of protein localization in the fission yeast Schizosaccharomyces pombe.</title>
        <authorList>
            <person name="Matsuyama A."/>
            <person name="Arai R."/>
            <person name="Yashiroda Y."/>
            <person name="Shirai A."/>
            <person name="Kamata A."/>
            <person name="Sekido S."/>
            <person name="Kobayashi Y."/>
            <person name="Hashimoto A."/>
            <person name="Hamamoto M."/>
            <person name="Hiraoka Y."/>
            <person name="Horinouchi S."/>
            <person name="Yoshida M."/>
        </authorList>
    </citation>
    <scope>SUBCELLULAR LOCATION [LARGE SCALE ANALYSIS]</scope>
</reference>
<sequence length="230" mass="25289">MEPSTPPMRGLCTPSTPESPGSFKGVIDASLEGNSSIMIDEIPESDLPAPQVSTFPPTPAKTPKKQLLPNLMLQDRSNSLERCMEEDREHNPFLSSSDNQLLSRKKRKPTPPPSDGLYYVFRGKRIKKSFRPGTDLSTFKPKLLFADSAPSSSSDNPTSSVDLNDYSQIGILPPNLNSIGNKMFSLKSRVPSSSSGSFVAPPPQMRLPAYSSPQKSRSNTKDENRHNLLR</sequence>
<keyword id="KW-0131">Cell cycle</keyword>
<keyword id="KW-0539">Nucleus</keyword>
<keyword id="KW-0597">Phosphoprotein</keyword>
<keyword id="KW-1185">Reference proteome</keyword>
<name>RUM1_SCHPO</name>
<gene>
    <name type="primary">rum1</name>
    <name type="ORF">SPBC32F12.09</name>
</gene>
<protein>
    <recommendedName>
        <fullName>Cyclin-dependent kinase inhibitor rum1</fullName>
    </recommendedName>
    <alternativeName>
        <fullName>p25-rum1</fullName>
    </alternativeName>
</protein>
<proteinExistence type="evidence at protein level"/>